<name>DNAK_METS4</name>
<feature type="chain" id="PRO_1000119731" description="Chaperone protein DnaK">
    <location>
        <begin position="1"/>
        <end position="639"/>
    </location>
</feature>
<feature type="region of interest" description="Disordered" evidence="2">
    <location>
        <begin position="601"/>
        <end position="639"/>
    </location>
</feature>
<feature type="compositionally biased region" description="Low complexity" evidence="2">
    <location>
        <begin position="601"/>
        <end position="613"/>
    </location>
</feature>
<feature type="compositionally biased region" description="Basic and acidic residues" evidence="2">
    <location>
        <begin position="630"/>
        <end position="639"/>
    </location>
</feature>
<feature type="modified residue" description="Phosphothreonine; by autocatalysis" evidence="1">
    <location>
        <position position="198"/>
    </location>
</feature>
<evidence type="ECO:0000255" key="1">
    <source>
        <dbReference type="HAMAP-Rule" id="MF_00332"/>
    </source>
</evidence>
<evidence type="ECO:0000256" key="2">
    <source>
        <dbReference type="SAM" id="MobiDB-lite"/>
    </source>
</evidence>
<gene>
    <name evidence="1" type="primary">dnaK</name>
    <name type="ordered locus">M446_6270</name>
</gene>
<sequence length="639" mass="68742">MGKVIGIDLGTTNSCVAVMEGTQPKVIENAEGARTTPSIVAFTDEGERLVGQPAKRQAVTNPSRTFFAIKRLIGRTYDDPMTQKDKGLVPYHIVRAGNGDAWVEADGKQFSPSQISAFTLQKMKETAESYLGQPVTQAVITVPAYFNDAQRQATKDAGKIAGLEVLRIINEPTAAALAYGLDKKKSGVIAVYDLGGGTFDVSILEIGDGVFEVKSTNGDTFLGGEDFDNRIVEYLAAEFKREQGIDLTRDKLALQRLKEAAEKAKIELSSATQTEINLPYITADASGPKHLALKLSRAKFESLVDDLIQRTIEPCRKALKDAGVAASEIDEVVLVGGMTRMPKIQDVVKTFFGKEPHKGVNPDEVVAIGAAVQAGVLQGDVKDVLLLDVTPLSLGIETLGGVFTRLIDRNTTIPTKKSQVFSTAEDNQNAVTIRVFQGEREMAADNKLLGQFDLVGIPPAPRGVPQIEVTFDIDANGIVNVTAKDKATGKEHQIRIQASGGLSDTEIQRMVQEAEANAAEDKKRRELVEVKNQGESLVHATEKSVKEYGDKVSESDRAGISTAIDALRQALAGEDVETIKARTTDLMQASMKLGEAMYAAQAGGGEAASAGAEDPQAKKDDVIDADFQEVDDKDHKKRA</sequence>
<comment type="function">
    <text evidence="1">Acts as a chaperone.</text>
</comment>
<comment type="induction">
    <text evidence="1">By stress conditions e.g. heat shock.</text>
</comment>
<comment type="similarity">
    <text evidence="1">Belongs to the heat shock protein 70 family.</text>
</comment>
<keyword id="KW-0067">ATP-binding</keyword>
<keyword id="KW-0143">Chaperone</keyword>
<keyword id="KW-0547">Nucleotide-binding</keyword>
<keyword id="KW-0597">Phosphoprotein</keyword>
<keyword id="KW-0346">Stress response</keyword>
<organism>
    <name type="scientific">Methylobacterium sp. (strain 4-46)</name>
    <dbReference type="NCBI Taxonomy" id="426117"/>
    <lineage>
        <taxon>Bacteria</taxon>
        <taxon>Pseudomonadati</taxon>
        <taxon>Pseudomonadota</taxon>
        <taxon>Alphaproteobacteria</taxon>
        <taxon>Hyphomicrobiales</taxon>
        <taxon>Methylobacteriaceae</taxon>
        <taxon>Methylobacterium</taxon>
    </lineage>
</organism>
<protein>
    <recommendedName>
        <fullName evidence="1">Chaperone protein DnaK</fullName>
    </recommendedName>
    <alternativeName>
        <fullName evidence="1">HSP70</fullName>
    </alternativeName>
    <alternativeName>
        <fullName evidence="1">Heat shock 70 kDa protein</fullName>
    </alternativeName>
    <alternativeName>
        <fullName evidence="1">Heat shock protein 70</fullName>
    </alternativeName>
</protein>
<reference key="1">
    <citation type="submission" date="2008-02" db="EMBL/GenBank/DDBJ databases">
        <title>Complete sequence of chromosome of Methylobacterium sp. 4-46.</title>
        <authorList>
            <consortium name="US DOE Joint Genome Institute"/>
            <person name="Copeland A."/>
            <person name="Lucas S."/>
            <person name="Lapidus A."/>
            <person name="Glavina del Rio T."/>
            <person name="Dalin E."/>
            <person name="Tice H."/>
            <person name="Bruce D."/>
            <person name="Goodwin L."/>
            <person name="Pitluck S."/>
            <person name="Chertkov O."/>
            <person name="Brettin T."/>
            <person name="Detter J.C."/>
            <person name="Han C."/>
            <person name="Kuske C.R."/>
            <person name="Schmutz J."/>
            <person name="Larimer F."/>
            <person name="Land M."/>
            <person name="Hauser L."/>
            <person name="Kyrpides N."/>
            <person name="Ivanova N."/>
            <person name="Marx C.J."/>
            <person name="Richardson P."/>
        </authorList>
    </citation>
    <scope>NUCLEOTIDE SEQUENCE [LARGE SCALE GENOMIC DNA]</scope>
    <source>
        <strain>4-46</strain>
    </source>
</reference>
<dbReference type="EMBL" id="CP000943">
    <property type="protein sequence ID" value="ACA20536.1"/>
    <property type="molecule type" value="Genomic_DNA"/>
</dbReference>
<dbReference type="RefSeq" id="WP_012335914.1">
    <property type="nucleotide sequence ID" value="NC_010511.1"/>
</dbReference>
<dbReference type="SMR" id="B0UR84"/>
<dbReference type="STRING" id="426117.M446_6270"/>
<dbReference type="KEGG" id="met:M446_6270"/>
<dbReference type="eggNOG" id="COG0443">
    <property type="taxonomic scope" value="Bacteria"/>
</dbReference>
<dbReference type="HOGENOM" id="CLU_005965_2_1_5"/>
<dbReference type="GO" id="GO:0005524">
    <property type="term" value="F:ATP binding"/>
    <property type="evidence" value="ECO:0007669"/>
    <property type="project" value="UniProtKB-UniRule"/>
</dbReference>
<dbReference type="GO" id="GO:0140662">
    <property type="term" value="F:ATP-dependent protein folding chaperone"/>
    <property type="evidence" value="ECO:0007669"/>
    <property type="project" value="InterPro"/>
</dbReference>
<dbReference type="GO" id="GO:0051082">
    <property type="term" value="F:unfolded protein binding"/>
    <property type="evidence" value="ECO:0007669"/>
    <property type="project" value="InterPro"/>
</dbReference>
<dbReference type="CDD" id="cd11733">
    <property type="entry name" value="ASKHA_NBD_HSP70_HSPA9"/>
    <property type="match status" value="1"/>
</dbReference>
<dbReference type="FunFam" id="2.60.34.10:FF:000014">
    <property type="entry name" value="Chaperone protein DnaK HSP70"/>
    <property type="match status" value="1"/>
</dbReference>
<dbReference type="FunFam" id="3.30.420.40:FF:000020">
    <property type="entry name" value="Chaperone protein HscA homolog"/>
    <property type="match status" value="1"/>
</dbReference>
<dbReference type="FunFam" id="1.20.1270.10:FF:000001">
    <property type="entry name" value="Molecular chaperone DnaK"/>
    <property type="match status" value="1"/>
</dbReference>
<dbReference type="FunFam" id="3.30.420.40:FF:000004">
    <property type="entry name" value="Molecular chaperone DnaK"/>
    <property type="match status" value="1"/>
</dbReference>
<dbReference type="FunFam" id="3.90.640.10:FF:000003">
    <property type="entry name" value="Molecular chaperone DnaK"/>
    <property type="match status" value="1"/>
</dbReference>
<dbReference type="Gene3D" id="1.20.1270.10">
    <property type="match status" value="1"/>
</dbReference>
<dbReference type="Gene3D" id="3.30.420.40">
    <property type="match status" value="2"/>
</dbReference>
<dbReference type="Gene3D" id="3.90.640.10">
    <property type="entry name" value="Actin, Chain A, domain 4"/>
    <property type="match status" value="1"/>
</dbReference>
<dbReference type="Gene3D" id="2.60.34.10">
    <property type="entry name" value="Substrate Binding Domain Of DNAk, Chain A, domain 1"/>
    <property type="match status" value="1"/>
</dbReference>
<dbReference type="HAMAP" id="MF_00332">
    <property type="entry name" value="DnaK"/>
    <property type="match status" value="1"/>
</dbReference>
<dbReference type="InterPro" id="IPR043129">
    <property type="entry name" value="ATPase_NBD"/>
</dbReference>
<dbReference type="InterPro" id="IPR012725">
    <property type="entry name" value="Chaperone_DnaK"/>
</dbReference>
<dbReference type="InterPro" id="IPR018181">
    <property type="entry name" value="Heat_shock_70_CS"/>
</dbReference>
<dbReference type="InterPro" id="IPR029048">
    <property type="entry name" value="HSP70_C_sf"/>
</dbReference>
<dbReference type="InterPro" id="IPR029047">
    <property type="entry name" value="HSP70_peptide-bd_sf"/>
</dbReference>
<dbReference type="InterPro" id="IPR013126">
    <property type="entry name" value="Hsp_70_fam"/>
</dbReference>
<dbReference type="NCBIfam" id="NF001413">
    <property type="entry name" value="PRK00290.1"/>
    <property type="match status" value="1"/>
</dbReference>
<dbReference type="NCBIfam" id="NF003520">
    <property type="entry name" value="PRK05183.1"/>
    <property type="match status" value="1"/>
</dbReference>
<dbReference type="NCBIfam" id="TIGR02350">
    <property type="entry name" value="prok_dnaK"/>
    <property type="match status" value="1"/>
</dbReference>
<dbReference type="PANTHER" id="PTHR19375">
    <property type="entry name" value="HEAT SHOCK PROTEIN 70KDA"/>
    <property type="match status" value="1"/>
</dbReference>
<dbReference type="Pfam" id="PF00012">
    <property type="entry name" value="HSP70"/>
    <property type="match status" value="1"/>
</dbReference>
<dbReference type="PRINTS" id="PR00301">
    <property type="entry name" value="HEATSHOCK70"/>
</dbReference>
<dbReference type="SUPFAM" id="SSF53067">
    <property type="entry name" value="Actin-like ATPase domain"/>
    <property type="match status" value="2"/>
</dbReference>
<dbReference type="SUPFAM" id="SSF100934">
    <property type="entry name" value="Heat shock protein 70kD (HSP70), C-terminal subdomain"/>
    <property type="match status" value="1"/>
</dbReference>
<dbReference type="SUPFAM" id="SSF100920">
    <property type="entry name" value="Heat shock protein 70kD (HSP70), peptide-binding domain"/>
    <property type="match status" value="1"/>
</dbReference>
<dbReference type="PROSITE" id="PS00297">
    <property type="entry name" value="HSP70_1"/>
    <property type="match status" value="1"/>
</dbReference>
<dbReference type="PROSITE" id="PS00329">
    <property type="entry name" value="HSP70_2"/>
    <property type="match status" value="1"/>
</dbReference>
<dbReference type="PROSITE" id="PS01036">
    <property type="entry name" value="HSP70_3"/>
    <property type="match status" value="1"/>
</dbReference>
<proteinExistence type="inferred from homology"/>
<accession>B0UR84</accession>